<evidence type="ECO:0000255" key="1">
    <source>
        <dbReference type="HAMAP-Rule" id="MF_01220"/>
    </source>
</evidence>
<sequence>MAEPVYHRVVVKLSGEYFAGDQSFGIHQPTIDRIAGDLIAAQQLGVEIAVVIGGGNIFRGVEVSTRGVSRPTGDTMGMLATVMNCLALEAAIERRGVSARTLSAFVMPQVCELFTRATAHRYLAEKRIVLLGGGTGNPFFTTDTTAVLRAAEIGAQAVLKATNVDGVYSADPKKDPSAQRFERLTHSQALDGGYKVMDATAFALARDTLLPIIVFSIAEPGSVGAILSGTGRGTIVAG</sequence>
<reference key="1">
    <citation type="submission" date="2006-09" db="EMBL/GenBank/DDBJ databases">
        <title>Complete sequence of Rhodopseudomonas palustris BisA53.</title>
        <authorList>
            <consortium name="US DOE Joint Genome Institute"/>
            <person name="Copeland A."/>
            <person name="Lucas S."/>
            <person name="Lapidus A."/>
            <person name="Barry K."/>
            <person name="Detter J.C."/>
            <person name="Glavina del Rio T."/>
            <person name="Hammon N."/>
            <person name="Israni S."/>
            <person name="Dalin E."/>
            <person name="Tice H."/>
            <person name="Pitluck S."/>
            <person name="Chain P."/>
            <person name="Malfatti S."/>
            <person name="Shin M."/>
            <person name="Vergez L."/>
            <person name="Schmutz J."/>
            <person name="Larimer F."/>
            <person name="Land M."/>
            <person name="Hauser L."/>
            <person name="Pelletier D.A."/>
            <person name="Kyrpides N."/>
            <person name="Kim E."/>
            <person name="Harwood C.S."/>
            <person name="Oda Y."/>
            <person name="Richardson P."/>
        </authorList>
    </citation>
    <scope>NUCLEOTIDE SEQUENCE [LARGE SCALE GENOMIC DNA]</scope>
    <source>
        <strain>BisA53</strain>
    </source>
</reference>
<gene>
    <name evidence="1" type="primary">pyrH</name>
    <name type="ordered locus">RPE_2555</name>
</gene>
<protein>
    <recommendedName>
        <fullName evidence="1">Uridylate kinase</fullName>
        <shortName evidence="1">UK</shortName>
        <ecNumber evidence="1">2.7.4.22</ecNumber>
    </recommendedName>
    <alternativeName>
        <fullName evidence="1">Uridine monophosphate kinase</fullName>
        <shortName evidence="1">UMP kinase</shortName>
        <shortName evidence="1">UMPK</shortName>
    </alternativeName>
</protein>
<accession>Q07NJ1</accession>
<name>PYRH_RHOP5</name>
<dbReference type="EC" id="2.7.4.22" evidence="1"/>
<dbReference type="EMBL" id="CP000463">
    <property type="protein sequence ID" value="ABJ06493.1"/>
    <property type="molecule type" value="Genomic_DNA"/>
</dbReference>
<dbReference type="SMR" id="Q07NJ1"/>
<dbReference type="STRING" id="316055.RPE_2555"/>
<dbReference type="KEGG" id="rpe:RPE_2555"/>
<dbReference type="eggNOG" id="COG0528">
    <property type="taxonomic scope" value="Bacteria"/>
</dbReference>
<dbReference type="HOGENOM" id="CLU_033861_0_0_5"/>
<dbReference type="OrthoDB" id="9807458at2"/>
<dbReference type="UniPathway" id="UPA00159">
    <property type="reaction ID" value="UER00275"/>
</dbReference>
<dbReference type="GO" id="GO:0005829">
    <property type="term" value="C:cytosol"/>
    <property type="evidence" value="ECO:0007669"/>
    <property type="project" value="TreeGrafter"/>
</dbReference>
<dbReference type="GO" id="GO:0005524">
    <property type="term" value="F:ATP binding"/>
    <property type="evidence" value="ECO:0007669"/>
    <property type="project" value="UniProtKB-KW"/>
</dbReference>
<dbReference type="GO" id="GO:0033862">
    <property type="term" value="F:UMP kinase activity"/>
    <property type="evidence" value="ECO:0007669"/>
    <property type="project" value="UniProtKB-EC"/>
</dbReference>
<dbReference type="GO" id="GO:0044210">
    <property type="term" value="P:'de novo' CTP biosynthetic process"/>
    <property type="evidence" value="ECO:0007669"/>
    <property type="project" value="UniProtKB-UniRule"/>
</dbReference>
<dbReference type="GO" id="GO:0006225">
    <property type="term" value="P:UDP biosynthetic process"/>
    <property type="evidence" value="ECO:0007669"/>
    <property type="project" value="TreeGrafter"/>
</dbReference>
<dbReference type="CDD" id="cd04254">
    <property type="entry name" value="AAK_UMPK-PyrH-Ec"/>
    <property type="match status" value="1"/>
</dbReference>
<dbReference type="FunFam" id="3.40.1160.10:FF:000001">
    <property type="entry name" value="Uridylate kinase"/>
    <property type="match status" value="1"/>
</dbReference>
<dbReference type="Gene3D" id="3.40.1160.10">
    <property type="entry name" value="Acetylglutamate kinase-like"/>
    <property type="match status" value="1"/>
</dbReference>
<dbReference type="HAMAP" id="MF_01220_B">
    <property type="entry name" value="PyrH_B"/>
    <property type="match status" value="1"/>
</dbReference>
<dbReference type="InterPro" id="IPR036393">
    <property type="entry name" value="AceGlu_kinase-like_sf"/>
</dbReference>
<dbReference type="InterPro" id="IPR001048">
    <property type="entry name" value="Asp/Glu/Uridylate_kinase"/>
</dbReference>
<dbReference type="InterPro" id="IPR011817">
    <property type="entry name" value="Uridylate_kinase"/>
</dbReference>
<dbReference type="InterPro" id="IPR015963">
    <property type="entry name" value="Uridylate_kinase_bac"/>
</dbReference>
<dbReference type="NCBIfam" id="TIGR02075">
    <property type="entry name" value="pyrH_bact"/>
    <property type="match status" value="1"/>
</dbReference>
<dbReference type="PANTHER" id="PTHR42833">
    <property type="entry name" value="URIDYLATE KINASE"/>
    <property type="match status" value="1"/>
</dbReference>
<dbReference type="PANTHER" id="PTHR42833:SF4">
    <property type="entry name" value="URIDYLATE KINASE PUMPKIN, CHLOROPLASTIC"/>
    <property type="match status" value="1"/>
</dbReference>
<dbReference type="Pfam" id="PF00696">
    <property type="entry name" value="AA_kinase"/>
    <property type="match status" value="1"/>
</dbReference>
<dbReference type="PIRSF" id="PIRSF005650">
    <property type="entry name" value="Uridylate_kin"/>
    <property type="match status" value="1"/>
</dbReference>
<dbReference type="SUPFAM" id="SSF53633">
    <property type="entry name" value="Carbamate kinase-like"/>
    <property type="match status" value="1"/>
</dbReference>
<proteinExistence type="inferred from homology"/>
<organism>
    <name type="scientific">Rhodopseudomonas palustris (strain BisA53)</name>
    <dbReference type="NCBI Taxonomy" id="316055"/>
    <lineage>
        <taxon>Bacteria</taxon>
        <taxon>Pseudomonadati</taxon>
        <taxon>Pseudomonadota</taxon>
        <taxon>Alphaproteobacteria</taxon>
        <taxon>Hyphomicrobiales</taxon>
        <taxon>Nitrobacteraceae</taxon>
        <taxon>Rhodopseudomonas</taxon>
    </lineage>
</organism>
<feature type="chain" id="PRO_0000323939" description="Uridylate kinase">
    <location>
        <begin position="1"/>
        <end position="238"/>
    </location>
</feature>
<feature type="binding site" evidence="1">
    <location>
        <begin position="12"/>
        <end position="15"/>
    </location>
    <ligand>
        <name>ATP</name>
        <dbReference type="ChEBI" id="CHEBI:30616"/>
    </ligand>
</feature>
<feature type="binding site" evidence="1">
    <location>
        <position position="54"/>
    </location>
    <ligand>
        <name>UMP</name>
        <dbReference type="ChEBI" id="CHEBI:57865"/>
    </ligand>
</feature>
<feature type="binding site" evidence="1">
    <location>
        <position position="55"/>
    </location>
    <ligand>
        <name>ATP</name>
        <dbReference type="ChEBI" id="CHEBI:30616"/>
    </ligand>
</feature>
<feature type="binding site" evidence="1">
    <location>
        <position position="59"/>
    </location>
    <ligand>
        <name>ATP</name>
        <dbReference type="ChEBI" id="CHEBI:30616"/>
    </ligand>
</feature>
<feature type="binding site" evidence="1">
    <location>
        <position position="74"/>
    </location>
    <ligand>
        <name>UMP</name>
        <dbReference type="ChEBI" id="CHEBI:57865"/>
    </ligand>
</feature>
<feature type="binding site" evidence="1">
    <location>
        <begin position="135"/>
        <end position="142"/>
    </location>
    <ligand>
        <name>UMP</name>
        <dbReference type="ChEBI" id="CHEBI:57865"/>
    </ligand>
</feature>
<feature type="binding site" evidence="1">
    <location>
        <position position="162"/>
    </location>
    <ligand>
        <name>ATP</name>
        <dbReference type="ChEBI" id="CHEBI:30616"/>
    </ligand>
</feature>
<feature type="binding site" evidence="1">
    <location>
        <position position="163"/>
    </location>
    <ligand>
        <name>ATP</name>
        <dbReference type="ChEBI" id="CHEBI:30616"/>
    </ligand>
</feature>
<feature type="binding site" evidence="1">
    <location>
        <position position="168"/>
    </location>
    <ligand>
        <name>ATP</name>
        <dbReference type="ChEBI" id="CHEBI:30616"/>
    </ligand>
</feature>
<feature type="binding site" evidence="1">
    <location>
        <position position="171"/>
    </location>
    <ligand>
        <name>ATP</name>
        <dbReference type="ChEBI" id="CHEBI:30616"/>
    </ligand>
</feature>
<comment type="function">
    <text evidence="1">Catalyzes the reversible phosphorylation of UMP to UDP.</text>
</comment>
<comment type="catalytic activity">
    <reaction evidence="1">
        <text>UMP + ATP = UDP + ADP</text>
        <dbReference type="Rhea" id="RHEA:24400"/>
        <dbReference type="ChEBI" id="CHEBI:30616"/>
        <dbReference type="ChEBI" id="CHEBI:57865"/>
        <dbReference type="ChEBI" id="CHEBI:58223"/>
        <dbReference type="ChEBI" id="CHEBI:456216"/>
        <dbReference type="EC" id="2.7.4.22"/>
    </reaction>
</comment>
<comment type="activity regulation">
    <text evidence="1">Inhibited by UTP.</text>
</comment>
<comment type="pathway">
    <text evidence="1">Pyrimidine metabolism; CTP biosynthesis via de novo pathway; UDP from UMP (UMPK route): step 1/1.</text>
</comment>
<comment type="subunit">
    <text evidence="1">Homohexamer.</text>
</comment>
<comment type="subcellular location">
    <subcellularLocation>
        <location evidence="1">Cytoplasm</location>
    </subcellularLocation>
</comment>
<comment type="similarity">
    <text evidence="1">Belongs to the UMP kinase family.</text>
</comment>
<keyword id="KW-0067">ATP-binding</keyword>
<keyword id="KW-0963">Cytoplasm</keyword>
<keyword id="KW-0418">Kinase</keyword>
<keyword id="KW-0547">Nucleotide-binding</keyword>
<keyword id="KW-0665">Pyrimidine biosynthesis</keyword>
<keyword id="KW-0808">Transferase</keyword>